<dbReference type="EC" id="3.1.4.53"/>
<dbReference type="EMBL" id="U60170">
    <property type="protein sequence ID" value="AAB03508.1"/>
    <property type="molecule type" value="Genomic_DNA"/>
</dbReference>
<dbReference type="EMBL" id="AJ005398">
    <property type="protein sequence ID" value="CAA06513.1"/>
    <property type="molecule type" value="Genomic_DNA"/>
</dbReference>
<dbReference type="EMBL" id="AAFI02000064">
    <property type="protein sequence ID" value="EAL65213.1"/>
    <property type="molecule type" value="Genomic_DNA"/>
</dbReference>
<dbReference type="RefSeq" id="XP_638612.1">
    <property type="nucleotide sequence ID" value="XM_633520.1"/>
</dbReference>
<dbReference type="SMR" id="Q23917"/>
<dbReference type="FunCoup" id="Q23917">
    <property type="interactions" value="40"/>
</dbReference>
<dbReference type="STRING" id="44689.Q23917"/>
<dbReference type="PaxDb" id="44689-DDB0191479"/>
<dbReference type="EnsemblProtists" id="EAL65213">
    <property type="protein sequence ID" value="EAL65213"/>
    <property type="gene ID" value="DDB_G0284331"/>
</dbReference>
<dbReference type="GeneID" id="8624583"/>
<dbReference type="KEGG" id="ddi:DDB_G0284331"/>
<dbReference type="dictyBase" id="DDB_G0284331">
    <property type="gene designation" value="regA"/>
</dbReference>
<dbReference type="VEuPathDB" id="AmoebaDB:DDB_G0284331"/>
<dbReference type="eggNOG" id="KOG1601">
    <property type="taxonomic scope" value="Eukaryota"/>
</dbReference>
<dbReference type="eggNOG" id="KOG3689">
    <property type="taxonomic scope" value="Eukaryota"/>
</dbReference>
<dbReference type="HOGENOM" id="CLU_354286_0_0_1"/>
<dbReference type="InParanoid" id="Q23917"/>
<dbReference type="OMA" id="ENHHAML"/>
<dbReference type="PhylomeDB" id="Q23917"/>
<dbReference type="BRENDA" id="3.1.4.53">
    <property type="organism ID" value="1939"/>
</dbReference>
<dbReference type="Reactome" id="R-DDI-111957">
    <property type="pathway name" value="Cam-PDE 1 activation"/>
</dbReference>
<dbReference type="Reactome" id="R-DDI-165160">
    <property type="pathway name" value="PDE3B signalling"/>
</dbReference>
<dbReference type="Reactome" id="R-DDI-180024">
    <property type="pathway name" value="DARPP-32 events"/>
</dbReference>
<dbReference type="Reactome" id="R-DDI-418457">
    <property type="pathway name" value="cGMP effects"/>
</dbReference>
<dbReference type="Reactome" id="R-DDI-418555">
    <property type="pathway name" value="G alpha (s) signalling events"/>
</dbReference>
<dbReference type="SABIO-RK" id="Q23917"/>
<dbReference type="PRO" id="PR:Q23917"/>
<dbReference type="Proteomes" id="UP000002195">
    <property type="component" value="Chromosome 4"/>
</dbReference>
<dbReference type="GO" id="GO:0005829">
    <property type="term" value="C:cytosol"/>
    <property type="evidence" value="ECO:0000304"/>
    <property type="project" value="dictyBase"/>
</dbReference>
<dbReference type="GO" id="GO:0004115">
    <property type="term" value="F:3',5'-cyclic-AMP phosphodiesterase activity"/>
    <property type="evidence" value="ECO:0000314"/>
    <property type="project" value="dictyBase"/>
</dbReference>
<dbReference type="GO" id="GO:0047555">
    <property type="term" value="F:3',5'-cyclic-GMP phosphodiesterase activity"/>
    <property type="evidence" value="ECO:0000318"/>
    <property type="project" value="GO_Central"/>
</dbReference>
<dbReference type="GO" id="GO:0004114">
    <property type="term" value="F:3',5'-cyclic-nucleotide phosphodiesterase activity"/>
    <property type="evidence" value="ECO:0000314"/>
    <property type="project" value="dictyBase"/>
</dbReference>
<dbReference type="GO" id="GO:0030552">
    <property type="term" value="F:cAMP binding"/>
    <property type="evidence" value="ECO:0007669"/>
    <property type="project" value="UniProtKB-KW"/>
</dbReference>
<dbReference type="GO" id="GO:0046872">
    <property type="term" value="F:metal ion binding"/>
    <property type="evidence" value="ECO:0007669"/>
    <property type="project" value="UniProtKB-KW"/>
</dbReference>
<dbReference type="GO" id="GO:0000156">
    <property type="term" value="F:phosphorelay response regulator activity"/>
    <property type="evidence" value="ECO:0000315"/>
    <property type="project" value="dictyBase"/>
</dbReference>
<dbReference type="GO" id="GO:0019933">
    <property type="term" value="P:cAMP-mediated signaling"/>
    <property type="evidence" value="ECO:0000318"/>
    <property type="project" value="GO_Central"/>
</dbReference>
<dbReference type="GO" id="GO:0120320">
    <property type="term" value="P:lateral pseudopodium retraction"/>
    <property type="evidence" value="ECO:0000315"/>
    <property type="project" value="dictyBase"/>
</dbReference>
<dbReference type="GO" id="GO:0000160">
    <property type="term" value="P:phosphorelay signal transduction system"/>
    <property type="evidence" value="ECO:0000315"/>
    <property type="project" value="dictyBase"/>
</dbReference>
<dbReference type="GO" id="GO:0061128">
    <property type="term" value="P:positive regulation of chemotaxis to cAMP by DIF-2"/>
    <property type="evidence" value="ECO:0000315"/>
    <property type="project" value="dictyBase"/>
</dbReference>
<dbReference type="GO" id="GO:0051281">
    <property type="term" value="P:positive regulation of release of sequestered calcium ion into cytosol"/>
    <property type="evidence" value="ECO:0000315"/>
    <property type="project" value="dictyBase"/>
</dbReference>
<dbReference type="GO" id="GO:1904776">
    <property type="term" value="P:regulation of protein localization to cell cortex"/>
    <property type="evidence" value="ECO:0000315"/>
    <property type="project" value="dictyBase"/>
</dbReference>
<dbReference type="GO" id="GO:0051279">
    <property type="term" value="P:regulation of release of sequestered calcium ion into cytosol"/>
    <property type="evidence" value="ECO:0000315"/>
    <property type="project" value="dictyBase"/>
</dbReference>
<dbReference type="GO" id="GO:0006970">
    <property type="term" value="P:response to osmotic stress"/>
    <property type="evidence" value="ECO:0000304"/>
    <property type="project" value="dictyBase"/>
</dbReference>
<dbReference type="GO" id="GO:0010225">
    <property type="term" value="P:response to UV-C"/>
    <property type="evidence" value="ECO:0000314"/>
    <property type="project" value="dictyBase"/>
</dbReference>
<dbReference type="GO" id="GO:0030587">
    <property type="term" value="P:sorocarp development"/>
    <property type="evidence" value="ECO:0000315"/>
    <property type="project" value="dictyBase"/>
</dbReference>
<dbReference type="GO" id="GO:0031288">
    <property type="term" value="P:sorocarp morphogenesis"/>
    <property type="evidence" value="ECO:0000315"/>
    <property type="project" value="dictyBase"/>
</dbReference>
<dbReference type="GO" id="GO:0048837">
    <property type="term" value="P:sorocarp sorus development"/>
    <property type="evidence" value="ECO:0000315"/>
    <property type="project" value="dictyBase"/>
</dbReference>
<dbReference type="GO" id="GO:0030435">
    <property type="term" value="P:sporulation resulting in formation of a cellular spore"/>
    <property type="evidence" value="ECO:0000315"/>
    <property type="project" value="dictyBase"/>
</dbReference>
<dbReference type="CDD" id="cd00077">
    <property type="entry name" value="HDc"/>
    <property type="match status" value="1"/>
</dbReference>
<dbReference type="CDD" id="cd00156">
    <property type="entry name" value="REC"/>
    <property type="match status" value="1"/>
</dbReference>
<dbReference type="FunFam" id="3.40.50.2300:FF:001034">
    <property type="match status" value="1"/>
</dbReference>
<dbReference type="FunFam" id="1.10.1300.10:FF:000045">
    <property type="entry name" value="3',5'-cyclic-nucleotide phosphodiesterase regA"/>
    <property type="match status" value="1"/>
</dbReference>
<dbReference type="Gene3D" id="3.40.50.2300">
    <property type="match status" value="1"/>
</dbReference>
<dbReference type="Gene3D" id="1.10.1300.10">
    <property type="entry name" value="3'5'-cyclic nucleotide phosphodiesterase, catalytic domain"/>
    <property type="match status" value="1"/>
</dbReference>
<dbReference type="InterPro" id="IPR011006">
    <property type="entry name" value="CheY-like_superfamily"/>
</dbReference>
<dbReference type="InterPro" id="IPR003607">
    <property type="entry name" value="HD/PDEase_dom"/>
</dbReference>
<dbReference type="InterPro" id="IPR023088">
    <property type="entry name" value="PDEase"/>
</dbReference>
<dbReference type="InterPro" id="IPR002073">
    <property type="entry name" value="PDEase_catalytic_dom"/>
</dbReference>
<dbReference type="InterPro" id="IPR036971">
    <property type="entry name" value="PDEase_catalytic_dom_sf"/>
</dbReference>
<dbReference type="InterPro" id="IPR023174">
    <property type="entry name" value="PDEase_CS"/>
</dbReference>
<dbReference type="InterPro" id="IPR001789">
    <property type="entry name" value="Sig_transdc_resp-reg_receiver"/>
</dbReference>
<dbReference type="PANTHER" id="PTHR11347">
    <property type="entry name" value="CYCLIC NUCLEOTIDE PHOSPHODIESTERASE"/>
    <property type="match status" value="1"/>
</dbReference>
<dbReference type="Pfam" id="PF00233">
    <property type="entry name" value="PDEase_I"/>
    <property type="match status" value="1"/>
</dbReference>
<dbReference type="Pfam" id="PF00072">
    <property type="entry name" value="Response_reg"/>
    <property type="match status" value="1"/>
</dbReference>
<dbReference type="PRINTS" id="PR00387">
    <property type="entry name" value="PDIESTERASE1"/>
</dbReference>
<dbReference type="SMART" id="SM00471">
    <property type="entry name" value="HDc"/>
    <property type="match status" value="1"/>
</dbReference>
<dbReference type="SMART" id="SM00448">
    <property type="entry name" value="REC"/>
    <property type="match status" value="1"/>
</dbReference>
<dbReference type="SUPFAM" id="SSF52172">
    <property type="entry name" value="CheY-like"/>
    <property type="match status" value="1"/>
</dbReference>
<dbReference type="SUPFAM" id="SSF109604">
    <property type="entry name" value="HD-domain/PDEase-like"/>
    <property type="match status" value="1"/>
</dbReference>
<dbReference type="PROSITE" id="PS00126">
    <property type="entry name" value="PDEASE_I_1"/>
    <property type="match status" value="1"/>
</dbReference>
<dbReference type="PROSITE" id="PS51845">
    <property type="entry name" value="PDEASE_I_2"/>
    <property type="match status" value="1"/>
</dbReference>
<dbReference type="PROSITE" id="PS50110">
    <property type="entry name" value="RESPONSE_REGULATORY"/>
    <property type="match status" value="1"/>
</dbReference>
<proteinExistence type="evidence at protein level"/>
<gene>
    <name type="primary">regA</name>
    <name type="synonym">pde2</name>
    <name type="ORF">DDB_G0284331</name>
</gene>
<accession>Q23917</accession>
<accession>Q54PP2</accession>
<reference key="1">
    <citation type="journal article" date="1996" name="Proc. Natl. Acad. Sci. U.S.A.">
        <title>Developmental signal transduction pathways uncovered by genetic suppressors.</title>
        <authorList>
            <person name="Shaulsky G."/>
            <person name="Escalante R."/>
            <person name="Loomis W.F."/>
        </authorList>
    </citation>
    <scope>NUCLEOTIDE SEQUENCE [GENOMIC DNA]</scope>
    <scope>DISRUPTION PHENOTYPE</scope>
    <source>
        <strain>AX4</strain>
    </source>
</reference>
<reference key="2">
    <citation type="journal article" date="1998" name="EMBO J.">
        <title>An intersection of the cAMP/PKA and two-component signal transduction systems in Dictyostelium.</title>
        <authorList>
            <person name="Thomason P.A."/>
            <person name="Traynor D."/>
            <person name="Cavet G."/>
            <person name="Chang W.-T."/>
            <person name="Harwood A.J."/>
            <person name="Kay R.R."/>
        </authorList>
    </citation>
    <scope>NUCLEOTIDE SEQUENCE [GENOMIC DNA]</scope>
    <scope>ACTIVITY REGULATION</scope>
    <scope>MUTAGENESIS OF ASP-212</scope>
    <source>
        <strain>AX2</strain>
    </source>
</reference>
<reference key="3">
    <citation type="journal article" date="2005" name="Nature">
        <title>The genome of the social amoeba Dictyostelium discoideum.</title>
        <authorList>
            <person name="Eichinger L."/>
            <person name="Pachebat J.A."/>
            <person name="Gloeckner G."/>
            <person name="Rajandream M.A."/>
            <person name="Sucgang R."/>
            <person name="Berriman M."/>
            <person name="Song J."/>
            <person name="Olsen R."/>
            <person name="Szafranski K."/>
            <person name="Xu Q."/>
            <person name="Tunggal B."/>
            <person name="Kummerfeld S."/>
            <person name="Madera M."/>
            <person name="Konfortov B.A."/>
            <person name="Rivero F."/>
            <person name="Bankier A.T."/>
            <person name="Lehmann R."/>
            <person name="Hamlin N."/>
            <person name="Davies R."/>
            <person name="Gaudet P."/>
            <person name="Fey P."/>
            <person name="Pilcher K."/>
            <person name="Chen G."/>
            <person name="Saunders D."/>
            <person name="Sodergren E.J."/>
            <person name="Davis P."/>
            <person name="Kerhornou A."/>
            <person name="Nie X."/>
            <person name="Hall N."/>
            <person name="Anjard C."/>
            <person name="Hemphill L."/>
            <person name="Bason N."/>
            <person name="Farbrother P."/>
            <person name="Desany B."/>
            <person name="Just E."/>
            <person name="Morio T."/>
            <person name="Rost R."/>
            <person name="Churcher C.M."/>
            <person name="Cooper J."/>
            <person name="Haydock S."/>
            <person name="van Driessche N."/>
            <person name="Cronin A."/>
            <person name="Goodhead I."/>
            <person name="Muzny D.M."/>
            <person name="Mourier T."/>
            <person name="Pain A."/>
            <person name="Lu M."/>
            <person name="Harper D."/>
            <person name="Lindsay R."/>
            <person name="Hauser H."/>
            <person name="James K.D."/>
            <person name="Quiles M."/>
            <person name="Madan Babu M."/>
            <person name="Saito T."/>
            <person name="Buchrieser C."/>
            <person name="Wardroper A."/>
            <person name="Felder M."/>
            <person name="Thangavelu M."/>
            <person name="Johnson D."/>
            <person name="Knights A."/>
            <person name="Loulseged H."/>
            <person name="Mungall K.L."/>
            <person name="Oliver K."/>
            <person name="Price C."/>
            <person name="Quail M.A."/>
            <person name="Urushihara H."/>
            <person name="Hernandez J."/>
            <person name="Rabbinowitsch E."/>
            <person name="Steffen D."/>
            <person name="Sanders M."/>
            <person name="Ma J."/>
            <person name="Kohara Y."/>
            <person name="Sharp S."/>
            <person name="Simmonds M.N."/>
            <person name="Spiegler S."/>
            <person name="Tivey A."/>
            <person name="Sugano S."/>
            <person name="White B."/>
            <person name="Walker D."/>
            <person name="Woodward J.R."/>
            <person name="Winckler T."/>
            <person name="Tanaka Y."/>
            <person name="Shaulsky G."/>
            <person name="Schleicher M."/>
            <person name="Weinstock G.M."/>
            <person name="Rosenthal A."/>
            <person name="Cox E.C."/>
            <person name="Chisholm R.L."/>
            <person name="Gibbs R.A."/>
            <person name="Loomis W.F."/>
            <person name="Platzer M."/>
            <person name="Kay R.R."/>
            <person name="Williams J.G."/>
            <person name="Dear P.H."/>
            <person name="Noegel A.A."/>
            <person name="Barrell B.G."/>
            <person name="Kuspa A."/>
        </authorList>
    </citation>
    <scope>NUCLEOTIDE SEQUENCE [LARGE SCALE GENOMIC DNA]</scope>
    <source>
        <strain>AX4</strain>
    </source>
</reference>
<reference key="4">
    <citation type="journal article" date="1997" name="J. Cell Sci.">
        <title>Histidine kinases in signal transduction pathways of eukaryotes.</title>
        <authorList>
            <person name="Loomis W.F."/>
            <person name="Shaulsky G."/>
            <person name="Wang N."/>
        </authorList>
    </citation>
    <scope>DISRUPTION PHENOTYPE</scope>
</reference>
<reference key="5">
    <citation type="journal article" date="1998" name="J. Biol. Chem.">
        <title>A novel adenylyl cyclase detected in rapidly developing mutants of Dictyostelium.</title>
        <authorList>
            <person name="Kim H.-J."/>
            <person name="Chang W.-T."/>
            <person name="Meima M."/>
            <person name="Gross J.D."/>
            <person name="Schaap P."/>
        </authorList>
    </citation>
    <scope>DISRUPTION PHENOTYPE</scope>
</reference>
<reference key="6">
    <citation type="journal article" date="1999" name="J. Biol. Chem.">
        <title>The RdeA-RegA system, a eukaryotic phospho-relay controlling cAMP breakdown.</title>
        <authorList>
            <person name="Thomason P.A."/>
            <person name="Traynor D."/>
            <person name="Stock J.B."/>
            <person name="Kay R.R."/>
        </authorList>
    </citation>
    <scope>ACTIVITY REGULATION</scope>
    <scope>FUNCTION</scope>
    <scope>PHOSPHORYLATION</scope>
    <scope>DEVELOPMENTAL STAGE</scope>
</reference>
<reference key="7">
    <citation type="journal article" date="2000" name="Microbiology">
        <title>Molecular basis for resistance to the anticancer drug cisplatin in Dictyostelium.</title>
        <authorList>
            <person name="Li G."/>
            <person name="Alexander H."/>
            <person name="Schneider N."/>
            <person name="Alexander S."/>
        </authorList>
    </citation>
    <scope>DISRUPTION PHENOTYPE</scope>
    <source>
        <strain>AX4</strain>
    </source>
</reference>
<reference key="8">
    <citation type="journal article" date="2002" name="Mol. Biol. Cell">
        <title>Identification and characterization of two unusual cGMP-stimulated phosphodiesterases in dictyostelium.</title>
        <authorList>
            <person name="Bosgraaf L."/>
            <person name="Russcher H."/>
            <person name="Snippe H."/>
            <person name="Bader S."/>
            <person name="Wind J."/>
            <person name="Van Haastert P.J.M."/>
        </authorList>
    </citation>
    <scope>FUNCTION</scope>
    <scope>SUBCELLULAR LOCATION</scope>
    <scope>BIOPHYSICOCHEMICAL PROPERTIES</scope>
</reference>
<reference key="9">
    <citation type="journal article" date="2007" name="Biochem. J.">
        <title>Seven Dictyostelium discoideum phosphodiesterases degrade three pools of cAMP and cGMP.</title>
        <authorList>
            <person name="Bader S."/>
            <person name="Kortholt A."/>
            <person name="Van Haastert P.J.M."/>
        </authorList>
    </citation>
    <scope>SUBCELLULAR LOCATION</scope>
    <scope>ACTIVITY REGULATION</scope>
</reference>
<reference key="10">
    <citation type="journal article" date="2007" name="Genome Biol.">
        <title>High-throughput analysis of spatio-temporal dynamics in Dictyostelium.</title>
        <authorList>
            <person name="Sawai S."/>
            <person name="Guan X.-J."/>
            <person name="Kuspa A."/>
            <person name="Cox E.C."/>
        </authorList>
    </citation>
    <scope>IDENTIFICATION</scope>
</reference>
<reference key="11">
    <citation type="journal article" date="2008" name="BMC Genomics">
        <title>Genome-wide transcriptional changes induced by phagocytosis or growth on bacteria in Dictyostelium.</title>
        <authorList>
            <person name="Sillo A."/>
            <person name="Bloomfield G."/>
            <person name="Balest A."/>
            <person name="Balbo A."/>
            <person name="Pergolizzi B."/>
            <person name="Peracino B."/>
            <person name="Skelton J."/>
            <person name="Ivens A."/>
            <person name="Bozzaro S."/>
        </authorList>
    </citation>
    <scope>INDUCTION [LARGE SCALE ANALYSIS]</scope>
</reference>
<protein>
    <recommendedName>
        <fullName>3',5'-cyclic-nucleotide phosphodiesterase regA</fullName>
        <shortName>PDEase regA</shortName>
        <ecNumber>3.1.4.53</ecNumber>
    </recommendedName>
    <alternativeName>
        <fullName>Phosphodiesterase 2</fullName>
        <shortName>DdPDE2</shortName>
    </alternativeName>
    <alternativeName>
        <fullName>Response regulator protein A</fullName>
    </alternativeName>
    <alternativeName>
        <fullName>cAMP-specific 3',5'-cAMP phosphodiesterase 2</fullName>
    </alternativeName>
</protein>
<comment type="function">
    <text evidence="5 7">Phosphodiesterase specific for cAMP. Involved in the degradation of intracellular cAMP. Morphological suppressor of tagB. Phosphorelay protein that accepts phosphate from rdeA or supplies phosphate from regA; depending on the relative concentration of the phosphodonor proteins.</text>
</comment>
<comment type="catalytic activity">
    <reaction>
        <text>3',5'-cyclic AMP + H2O = AMP + H(+)</text>
        <dbReference type="Rhea" id="RHEA:25277"/>
        <dbReference type="ChEBI" id="CHEBI:15377"/>
        <dbReference type="ChEBI" id="CHEBI:15378"/>
        <dbReference type="ChEBI" id="CHEBI:58165"/>
        <dbReference type="ChEBI" id="CHEBI:456215"/>
        <dbReference type="EC" id="3.1.4.53"/>
    </reaction>
</comment>
<comment type="cofactor">
    <cofactor evidence="1">
        <name>a divalent metal cation</name>
        <dbReference type="ChEBI" id="CHEBI:60240"/>
    </cofactor>
    <text evidence="1">Binds 2 divalent metal cations per subunit. Site 1 may preferentially bind zinc ions, while site 2 has a preference for magnesium and/or manganese ions.</text>
</comment>
<comment type="activity regulation">
    <text evidence="5 8 12">Inhibited by 3-isobutyl-1-methylxanthine (IBMX).</text>
</comment>
<comment type="biophysicochemical properties">
    <kinetics>
        <KM evidence="7">5 uM for cAMP</KM>
        <Vmax evidence="7">50.0 pmol/min/mg enzyme with cAMP as substrate</Vmax>
        <text>cAMP/cGMP selectivity of 200.</text>
    </kinetics>
</comment>
<comment type="subcellular location">
    <subcellularLocation>
        <location evidence="7 8">Cytoplasm</location>
        <location evidence="7 8">Cytosol</location>
    </subcellularLocation>
</comment>
<comment type="developmental stage">
    <text evidence="5">Expressed at low levels in vegetative cells and at high levels in prespore and prestalk cells during development. Developmentally regulated. Not observable before the end of aggregation, peaks at the mound stage and remains at a lower level thereafter.</text>
</comment>
<comment type="induction">
    <text evidence="9">Down-regulated by phagocytic stimuli.</text>
</comment>
<comment type="PTM">
    <text evidence="5">The phosphorelay mechanism involves the sequential transfer of a phosphate group from Asp-212 of pde2 to 'His-65' of rdeA. Phosphorylation of Asp-212 activates the phosphodiesterase domain.</text>
</comment>
<comment type="disruption phenotype">
    <text evidence="6 10 11 13">Rapid development. Cells are 4-fold more resistant to the antitumor agent cisplatin than are wild-type cells. Additionally it produces fruiting bodies with spore masses that cannot rise up the stalk during development. Mutant cells grow exponentially at the same rate as wild-type. Disruption of regA in a tagB null or in a tagC null background resulted in higher levels of sporulation. Disruption of regA in a dhka null background corrects the defect in stalk formation and suppresses the block to sporulation.</text>
</comment>
<comment type="similarity">
    <text evidence="14">Belongs to the cyclic nucleotide phosphodiesterase family.</text>
</comment>
<feature type="chain" id="PRO_0000198850" description="3',5'-cyclic-nucleotide phosphodiesterase regA">
    <location>
        <begin position="1"/>
        <end position="793"/>
    </location>
</feature>
<feature type="domain" description="Response regulatory" evidence="2">
    <location>
        <begin position="161"/>
        <end position="280"/>
    </location>
</feature>
<feature type="domain" description="PDEase" evidence="3">
    <location>
        <begin position="410"/>
        <end position="733"/>
    </location>
</feature>
<feature type="region of interest" description="Disordered" evidence="4">
    <location>
        <begin position="1"/>
        <end position="153"/>
    </location>
</feature>
<feature type="region of interest" description="Disordered" evidence="4">
    <location>
        <begin position="756"/>
        <end position="793"/>
    </location>
</feature>
<feature type="compositionally biased region" description="Low complexity" evidence="4">
    <location>
        <begin position="13"/>
        <end position="34"/>
    </location>
</feature>
<feature type="compositionally biased region" description="Low complexity" evidence="4">
    <location>
        <begin position="54"/>
        <end position="69"/>
    </location>
</feature>
<feature type="compositionally biased region" description="Low complexity" evidence="4">
    <location>
        <begin position="80"/>
        <end position="121"/>
    </location>
</feature>
<feature type="compositionally biased region" description="Low complexity" evidence="4">
    <location>
        <begin position="770"/>
        <end position="793"/>
    </location>
</feature>
<feature type="active site" description="Proton donor" evidence="1">
    <location>
        <position position="487"/>
    </location>
</feature>
<feature type="binding site" evidence="1">
    <location>
        <position position="491"/>
    </location>
    <ligand>
        <name>a divalent metal cation</name>
        <dbReference type="ChEBI" id="CHEBI:60240"/>
        <label>1</label>
    </ligand>
</feature>
<feature type="binding site" evidence="1">
    <location>
        <position position="527"/>
    </location>
    <ligand>
        <name>a divalent metal cation</name>
        <dbReference type="ChEBI" id="CHEBI:60240"/>
        <label>1</label>
    </ligand>
</feature>
<feature type="binding site" evidence="1">
    <location>
        <position position="528"/>
    </location>
    <ligand>
        <name>a divalent metal cation</name>
        <dbReference type="ChEBI" id="CHEBI:60240"/>
        <label>1</label>
    </ligand>
</feature>
<feature type="binding site" evidence="1">
    <location>
        <position position="528"/>
    </location>
    <ligand>
        <name>a divalent metal cation</name>
        <dbReference type="ChEBI" id="CHEBI:60240"/>
        <label>2</label>
    </ligand>
</feature>
<feature type="binding site" evidence="1">
    <location>
        <position position="639"/>
    </location>
    <ligand>
        <name>a divalent metal cation</name>
        <dbReference type="ChEBI" id="CHEBI:60240"/>
        <label>1</label>
    </ligand>
</feature>
<feature type="modified residue" description="4-aspartylphosphate" evidence="2">
    <location>
        <position position="212"/>
    </location>
</feature>
<feature type="mutagenesis site" description="Loss of phosphorylation and activation." evidence="12">
    <original>D</original>
    <variation>N</variation>
    <location>
        <position position="212"/>
    </location>
</feature>
<organism>
    <name type="scientific">Dictyostelium discoideum</name>
    <name type="common">Social amoeba</name>
    <dbReference type="NCBI Taxonomy" id="44689"/>
    <lineage>
        <taxon>Eukaryota</taxon>
        <taxon>Amoebozoa</taxon>
        <taxon>Evosea</taxon>
        <taxon>Eumycetozoa</taxon>
        <taxon>Dictyostelia</taxon>
        <taxon>Dictyosteliales</taxon>
        <taxon>Dictyosteliaceae</taxon>
        <taxon>Dictyostelium</taxon>
    </lineage>
</organism>
<name>PDE2_DICDI</name>
<keyword id="KW-0114">cAMP</keyword>
<keyword id="KW-0116">cAMP-binding</keyword>
<keyword id="KW-0963">Cytoplasm</keyword>
<keyword id="KW-0378">Hydrolase</keyword>
<keyword id="KW-0479">Metal-binding</keyword>
<keyword id="KW-0547">Nucleotide-binding</keyword>
<keyword id="KW-0597">Phosphoprotein</keyword>
<keyword id="KW-1185">Reference proteome</keyword>
<evidence type="ECO:0000250" key="1"/>
<evidence type="ECO:0000255" key="2">
    <source>
        <dbReference type="PROSITE-ProRule" id="PRU00169"/>
    </source>
</evidence>
<evidence type="ECO:0000255" key="3">
    <source>
        <dbReference type="PROSITE-ProRule" id="PRU01192"/>
    </source>
</evidence>
<evidence type="ECO:0000256" key="4">
    <source>
        <dbReference type="SAM" id="MobiDB-lite"/>
    </source>
</evidence>
<evidence type="ECO:0000269" key="5">
    <source>
    </source>
</evidence>
<evidence type="ECO:0000269" key="6">
    <source>
    </source>
</evidence>
<evidence type="ECO:0000269" key="7">
    <source>
    </source>
</evidence>
<evidence type="ECO:0000269" key="8">
    <source>
    </source>
</evidence>
<evidence type="ECO:0000269" key="9">
    <source>
    </source>
</evidence>
<evidence type="ECO:0000269" key="10">
    <source>
    </source>
</evidence>
<evidence type="ECO:0000269" key="11">
    <source>
    </source>
</evidence>
<evidence type="ECO:0000269" key="12">
    <source>
    </source>
</evidence>
<evidence type="ECO:0000269" key="13">
    <source>
    </source>
</evidence>
<evidence type="ECO:0000305" key="14"/>
<sequence length="793" mass="91176">MNNKQEEIDQFLSSTSTSPSPSSSSSPSNNDSTSLKSMISGIENLNVHSKGNDNKNNNNNNNNNNSNNNEKQKDIVSLENNSSSNNTTTTTTTTTTSNHNSNNNSNNNNNNINNNNINNNNYEPLVNGHNNGFGDKLNDQPSPSSHRVSDFSDEYSPSKVRILVADDDDVQRKILNNLLKKFHYNVTLVPNGEIAWEYINKGQQKYDLVLTDVMMPHITGFDLLQRINDHPVHRHIPVILMSGTAVDYKYANDTIKIGGQDFLTKPIAKELLKKKIDTVLQSIWQRRKEEEYKATLAQEREKGNKLAKEMELKEHEIEELTKKVSKMSSISKEAMESPLVSVTRNIEELLKQSSWSHYESEIKEKLSSILKELGSSNIYRPSFEKLIKNDSVDPVTKSFLVSEFSSTTSRRNSIPTFPQTTYNRDTKEVIKGWEFDVFKYSEDDLMPLLVDMFENFQLPEIFKIPIEKLQRFIMTVNALYRKNNRYHNFTHAFDVTQTVYTFLTSFNAAQYLTHLDIFALLISCMCHDLNHPGFNNTFQVNAQTELSLEYNDISVLENHHAMLTFKILRNSECNILEGLNEDQYKELRRSVVQLILATDMQNHFEHTNKFQHHLNNLPFDRNKKEDRQMILNFLIKCGDISNIARPWHLNFEWSLRVSDEFFQQSHYETICGYPVTPFMDKTKTTRARIAADFIDFVASPLFQSMAKFLKESQFLLKVISKNRENWQAYMELQKEGKCNDDDLQFMEDPTILVKSKLPKIDEEENRDKVSSSSSSSTAPLTSTSSSNNETSSS</sequence>